<accession>Q5GWE6</accession>
<dbReference type="EC" id="2.1.1.186" evidence="1"/>
<dbReference type="EMBL" id="AE013598">
    <property type="protein sequence ID" value="AAW76975.1"/>
    <property type="status" value="ALT_INIT"/>
    <property type="molecule type" value="Genomic_DNA"/>
</dbReference>
<dbReference type="SMR" id="Q5GWE6"/>
<dbReference type="STRING" id="291331.XOO3721"/>
<dbReference type="KEGG" id="xoo:XOO3721"/>
<dbReference type="PATRIC" id="fig|291331.8.peg.4125"/>
<dbReference type="HOGENOM" id="CLU_043780_0_0_6"/>
<dbReference type="Proteomes" id="UP000006735">
    <property type="component" value="Chromosome"/>
</dbReference>
<dbReference type="GO" id="GO:0005737">
    <property type="term" value="C:cytoplasm"/>
    <property type="evidence" value="ECO:0007669"/>
    <property type="project" value="UniProtKB-SubCell"/>
</dbReference>
<dbReference type="GO" id="GO:0008757">
    <property type="term" value="F:S-adenosylmethionine-dependent methyltransferase activity"/>
    <property type="evidence" value="ECO:0007669"/>
    <property type="project" value="UniProtKB-UniRule"/>
</dbReference>
<dbReference type="GO" id="GO:0032259">
    <property type="term" value="P:methylation"/>
    <property type="evidence" value="ECO:0007669"/>
    <property type="project" value="UniProtKB-KW"/>
</dbReference>
<dbReference type="GO" id="GO:0006364">
    <property type="term" value="P:rRNA processing"/>
    <property type="evidence" value="ECO:0007669"/>
    <property type="project" value="UniProtKB-UniRule"/>
</dbReference>
<dbReference type="Gene3D" id="3.30.2300.20">
    <property type="match status" value="1"/>
</dbReference>
<dbReference type="Gene3D" id="3.30.70.2810">
    <property type="match status" value="1"/>
</dbReference>
<dbReference type="Gene3D" id="3.40.50.150">
    <property type="entry name" value="Vaccinia Virus protein VP39"/>
    <property type="match status" value="1"/>
</dbReference>
<dbReference type="HAMAP" id="MF_01551">
    <property type="entry name" value="23SrRNA_methyltr_M"/>
    <property type="match status" value="1"/>
</dbReference>
<dbReference type="InterPro" id="IPR040739">
    <property type="entry name" value="RlmM_FDX"/>
</dbReference>
<dbReference type="InterPro" id="IPR048646">
    <property type="entry name" value="RlmM_THUMP-like"/>
</dbReference>
<dbReference type="InterPro" id="IPR002877">
    <property type="entry name" value="RNA_MeTrfase_FtsJ_dom"/>
</dbReference>
<dbReference type="InterPro" id="IPR011224">
    <property type="entry name" value="rRNA_MeTrfase_M"/>
</dbReference>
<dbReference type="InterPro" id="IPR029063">
    <property type="entry name" value="SAM-dependent_MTases_sf"/>
</dbReference>
<dbReference type="NCBIfam" id="NF008734">
    <property type="entry name" value="PRK11760.1"/>
    <property type="match status" value="1"/>
</dbReference>
<dbReference type="PANTHER" id="PTHR37524">
    <property type="entry name" value="RIBOSOMAL RNA LARGE SUBUNIT METHYLTRANSFERASE M"/>
    <property type="match status" value="1"/>
</dbReference>
<dbReference type="PANTHER" id="PTHR37524:SF2">
    <property type="entry name" value="RIBOSOMAL RNA METHYLTRANSFERASE FTSJ DOMAIN-CONTAINING PROTEIN"/>
    <property type="match status" value="1"/>
</dbReference>
<dbReference type="Pfam" id="PF01728">
    <property type="entry name" value="FtsJ"/>
    <property type="match status" value="1"/>
</dbReference>
<dbReference type="Pfam" id="PF18125">
    <property type="entry name" value="RlmM_FDX"/>
    <property type="match status" value="1"/>
</dbReference>
<dbReference type="Pfam" id="PF21239">
    <property type="entry name" value="RLMM_N"/>
    <property type="match status" value="1"/>
</dbReference>
<dbReference type="PIRSF" id="PIRSF028774">
    <property type="entry name" value="UCP028774"/>
    <property type="match status" value="1"/>
</dbReference>
<dbReference type="SUPFAM" id="SSF53335">
    <property type="entry name" value="S-adenosyl-L-methionine-dependent methyltransferases"/>
    <property type="match status" value="1"/>
</dbReference>
<evidence type="ECO:0000255" key="1">
    <source>
        <dbReference type="HAMAP-Rule" id="MF_01551"/>
    </source>
</evidence>
<evidence type="ECO:0000305" key="2"/>
<gene>
    <name evidence="1" type="primary">rlmM</name>
    <name type="ordered locus">XOO3721</name>
</gene>
<keyword id="KW-0963">Cytoplasm</keyword>
<keyword id="KW-0489">Methyltransferase</keyword>
<keyword id="KW-1185">Reference proteome</keyword>
<keyword id="KW-0698">rRNA processing</keyword>
<keyword id="KW-0949">S-adenosyl-L-methionine</keyword>
<keyword id="KW-0808">Transferase</keyword>
<name>RLMM_XANOR</name>
<protein>
    <recommendedName>
        <fullName evidence="1">Ribosomal RNA large subunit methyltransferase M</fullName>
        <ecNumber evidence="1">2.1.1.186</ecNumber>
    </recommendedName>
    <alternativeName>
        <fullName evidence="1">23S rRNA (cytidine2498-2'-O)-methyltransferase</fullName>
    </alternativeName>
    <alternativeName>
        <fullName evidence="1">23S rRNA 2'-O-ribose methyltransferase RlmM</fullName>
    </alternativeName>
</protein>
<proteinExistence type="inferred from homology"/>
<organism>
    <name type="scientific">Xanthomonas oryzae pv. oryzae (strain KACC10331 / KXO85)</name>
    <dbReference type="NCBI Taxonomy" id="291331"/>
    <lineage>
        <taxon>Bacteria</taxon>
        <taxon>Pseudomonadati</taxon>
        <taxon>Pseudomonadota</taxon>
        <taxon>Gammaproteobacteria</taxon>
        <taxon>Lysobacterales</taxon>
        <taxon>Lysobacteraceae</taxon>
        <taxon>Xanthomonas</taxon>
    </lineage>
</organism>
<feature type="chain" id="PRO_0000070436" description="Ribosomal RNA large subunit methyltransferase M">
    <location>
        <begin position="1"/>
        <end position="347"/>
    </location>
</feature>
<feature type="active site" description="Proton acceptor" evidence="1">
    <location>
        <position position="301"/>
    </location>
</feature>
<feature type="binding site" evidence="1">
    <location>
        <position position="184"/>
    </location>
    <ligand>
        <name>S-adenosyl-L-methionine</name>
        <dbReference type="ChEBI" id="CHEBI:59789"/>
    </ligand>
</feature>
<feature type="binding site" evidence="1">
    <location>
        <begin position="217"/>
        <end position="220"/>
    </location>
    <ligand>
        <name>S-adenosyl-L-methionine</name>
        <dbReference type="ChEBI" id="CHEBI:59789"/>
    </ligand>
</feature>
<feature type="binding site" evidence="1">
    <location>
        <position position="236"/>
    </location>
    <ligand>
        <name>S-adenosyl-L-methionine</name>
        <dbReference type="ChEBI" id="CHEBI:59789"/>
    </ligand>
</feature>
<feature type="binding site" evidence="1">
    <location>
        <position position="256"/>
    </location>
    <ligand>
        <name>S-adenosyl-L-methionine</name>
        <dbReference type="ChEBI" id="CHEBI:59789"/>
    </ligand>
</feature>
<feature type="binding site" evidence="1">
    <location>
        <position position="272"/>
    </location>
    <ligand>
        <name>S-adenosyl-L-methionine</name>
        <dbReference type="ChEBI" id="CHEBI:59789"/>
    </ligand>
</feature>
<sequence>MSGLLCYCRQGFEPELAAELSARAAFVGIAGYARTQRNDGYVLFVCDEAAQLAAKLQWRELIFARQKLVVIAELKGIDPKDRITPILAALEGQQRFGDLWVEHPDSDAGKPLAGLARSFGNALRPALRKAGLLTDKPQPRQPRLHICFLDGDHALLAVADSADSAPWPLGIPRLKLLPEAPSRSALKLDEALLTLLTPEEREALVKPGMRAADLGAAPGGWTWVLTRQHVHVTSVDNGPLRAHVLETGLVEHLRADGFHWKPAQPLDWMVCDMVEQPRRVAERMATWVREGWCRNTIFNLKLPMKKRWDETRLCLELFEQQAEKSLIVRAKQLYHDREEITVLAMRG</sequence>
<reference key="1">
    <citation type="journal article" date="2005" name="Nucleic Acids Res.">
        <title>The genome sequence of Xanthomonas oryzae pathovar oryzae KACC10331, the bacterial blight pathogen of rice.</title>
        <authorList>
            <person name="Lee B.-M."/>
            <person name="Park Y.-J."/>
            <person name="Park D.-S."/>
            <person name="Kang H.-W."/>
            <person name="Kim J.-G."/>
            <person name="Song E.-S."/>
            <person name="Park I.-C."/>
            <person name="Yoon U.-H."/>
            <person name="Hahn J.-H."/>
            <person name="Koo B.-S."/>
            <person name="Lee G.-B."/>
            <person name="Kim H."/>
            <person name="Park H.-S."/>
            <person name="Yoon K.-O."/>
            <person name="Kim J.-H."/>
            <person name="Jung C.-H."/>
            <person name="Koh N.-H."/>
            <person name="Seo J.-S."/>
            <person name="Go S.-J."/>
        </authorList>
    </citation>
    <scope>NUCLEOTIDE SEQUENCE [LARGE SCALE GENOMIC DNA]</scope>
    <source>
        <strain>KACC10331 / KXO85</strain>
    </source>
</reference>
<comment type="function">
    <text evidence="1">Catalyzes the 2'-O-methylation at nucleotide C2498 in 23S rRNA.</text>
</comment>
<comment type="catalytic activity">
    <reaction evidence="1">
        <text>cytidine(2498) in 23S rRNA + S-adenosyl-L-methionine = 2'-O-methylcytidine(2498) in 23S rRNA + S-adenosyl-L-homocysteine + H(+)</text>
        <dbReference type="Rhea" id="RHEA:42788"/>
        <dbReference type="Rhea" id="RHEA-COMP:10244"/>
        <dbReference type="Rhea" id="RHEA-COMP:10245"/>
        <dbReference type="ChEBI" id="CHEBI:15378"/>
        <dbReference type="ChEBI" id="CHEBI:57856"/>
        <dbReference type="ChEBI" id="CHEBI:59789"/>
        <dbReference type="ChEBI" id="CHEBI:74495"/>
        <dbReference type="ChEBI" id="CHEBI:82748"/>
        <dbReference type="EC" id="2.1.1.186"/>
    </reaction>
</comment>
<comment type="subunit">
    <text evidence="1">Monomer.</text>
</comment>
<comment type="subcellular location">
    <subcellularLocation>
        <location evidence="1">Cytoplasm</location>
    </subcellularLocation>
</comment>
<comment type="similarity">
    <text evidence="1">Belongs to the class I-like SAM-binding methyltransferase superfamily. RNA methyltransferase RlmE family. RlmM subfamily.</text>
</comment>
<comment type="sequence caution" evidence="2">
    <conflict type="erroneous initiation">
        <sequence resource="EMBL-CDS" id="AAW76975"/>
    </conflict>
</comment>